<comment type="catalytic activity">
    <reaction>
        <text>DNA(n) + a 2'-deoxyribonucleoside 5'-triphosphate = DNA(n+1) + diphosphate</text>
        <dbReference type="Rhea" id="RHEA:22508"/>
        <dbReference type="Rhea" id="RHEA-COMP:17339"/>
        <dbReference type="Rhea" id="RHEA-COMP:17340"/>
        <dbReference type="ChEBI" id="CHEBI:33019"/>
        <dbReference type="ChEBI" id="CHEBI:61560"/>
        <dbReference type="ChEBI" id="CHEBI:173112"/>
        <dbReference type="EC" id="2.7.7.7"/>
    </reaction>
</comment>
<comment type="PTM">
    <text evidence="3">This protein undergoes a protein self splicing that involves a post-translational excision of the intervening region (intein) followed by peptide ligation.</text>
</comment>
<comment type="similarity">
    <text evidence="3">Belongs to the DNA polymerase type-B family.</text>
</comment>
<sequence length="1634" mass="191710">MGMSMGKIKIDALIDNTYKTIEDKAVIYLYLINSILKDRDFKPYFYVELHKEKVENEDIEKIKEFLLKNDLLKFVENIEVVKKIILRKEKEVIKIIATHPQKVPKLRKIKECEIVKEIYEHDIPFAKRYLIDNEIIPMTYWDFENKKPVSIEIPKLKSVAFDMEVYNRDTEPNPERDPILMASFWDENGGKVITYKEFNHPNIEVVKNEKELIKKIIETLKEYDVIYTYNGDNFDFPYLKARAKIYGIDINLGKDGEELKIKRGGMEYRSYIPGRVHIDLYPISRRLLKLTKYTLEDVVYNLFGIEKLKIPHTKIVDYWANNDKTLIEYSLQDAKYTYKIGKYFFPLEVMFSRIVNQTPFEITRMSSGQMVEYLLMKRAFKENMIVPNKPDEEEYRRRVLTTYEGGYVKEPEKGMFEDIISMDFRCHPKGTKVVVKGKGIVNIEDVKEGNYVLGIDGWQKVKKVWKYEYEGELINVNGLKCTPNHKIPLRYKIKHKKINKNDYLVRDIYAKSLLTKFKGEGKLILCKDFETIGNYEKYINDMDEDFILKSELIGILLAEGHLLRRDIEYFDSSRGKKRISHQYRVEITVNEDEKDFIEKIKYIFKKLFNYELYVRRKKGTKAITLGCAKKDIYLKIEEILKNKEKYLPNAILRGFFEGDGYVNTVRRAVVVNQGTNNYDKIKFIASLLDRLGIKYSFYTYSYEERGKKLKRYVIEIFSKGDLIKFSILISFISRRKNNLLNEIIRQKTLYKIGDYGFYDLDDVCVSLESYKGEVYDLTLEGRPYYFANGILTHNSLYPSIIISYNISPDTLDCECCKDVSEKILGHWFCKKKEGLIPKTLRNLIERRINIKRRMKKMAEIGEINEEYNLLDYEQKSLKILANSILPDEYLTIIEEDGIKVVKIGEYIDDLMRKHKDKIKFSGISEILETKNLKTFSFDKITKKCEIKKVKALIRHPYFGKAYKIKLRSGRTIKVTRGHSLFKYENGKIVEVKGDDVRFGDLIVVPKKLTCVDKEVVINIPKRLINADEEEIKDLVITKHKDKAFFVKLKKTLEDIENNKLKVIFDDCILYLKELGLIDYNIIKKINKVDIKILDEEKFKAYKKYFDTVIEHGNFKKGRCNIQYIKIKDYIANIPDKEFEDCEIGAYSGKINALLKLDEKLAKFLGFFVTRGRLKKQKLKGETVYEISVYKSLPEYQKEIAETFKEVFGAGSMVKDKVTMDNKIVYLVLKYIFKCGDKDKKHIPEELFLASESVIKSFLDGFLKAKKNSHKGTSTFMAKDEKYLNQLMILFNLVGIPTRFTPVKNKGYKLTLNPKYGTVKDLMLDEVKEIEAFEYSGYVYDLSVEDNENFLVNNIYAHNSVYGYLAFPRARFYSRECAEIVTYLGRKYILETVKEAEKFGFKVLYIDTDGFYAIWKEKISKEELIKKAMEFVEYINSKLPGTMELEFEGYFKRGIFVTKKRYALIDENGRVTVKGLEFVRRDWSNIAKITQRRVLEALLVEGSIEKAKKIIQDVIKDLREKKIKKEDLIIYTQLTKDPKEYKTTAPHVEIAKKLMREGKRIKVGDIIGYIIVKGTKSISERAKLPEEVDIDDIDVNYYIDNQILPPVLRIMEAVGVSKNELKKEGAQLTLDKFFK</sequence>
<feature type="chain" id="PRO_0000007317" description="DNA polymerase, 1st part" evidence="1">
    <location>
        <begin position="1"/>
        <end position="425"/>
    </location>
</feature>
<feature type="chain" id="PRO_0000007318" description="Mja pol-1 intein" evidence="1">
    <location>
        <begin position="426"/>
        <end position="794"/>
    </location>
</feature>
<feature type="chain" id="PRO_0000007319" description="DNA polymerase, 2nd part" evidence="1">
    <location>
        <begin position="795"/>
        <end position="882"/>
    </location>
</feature>
<feature type="chain" id="PRO_0000007320" description="Mja pol-2 intein" evidence="1">
    <location>
        <begin position="883"/>
        <end position="1358"/>
    </location>
</feature>
<feature type="chain" id="PRO_0000007321" description="DNA polymerase, 3rd part" evidence="1">
    <location>
        <begin position="1359"/>
        <end position="1634"/>
    </location>
</feature>
<feature type="domain" description="DOD-type homing endonuclease 1" evidence="2">
    <location>
        <begin position="552"/>
        <end position="693"/>
    </location>
</feature>
<feature type="domain" description="DOD-type homing endonuclease 2" evidence="2">
    <location>
        <begin position="1163"/>
        <end position="1295"/>
    </location>
</feature>
<accession>Q58295</accession>
<organism>
    <name type="scientific">Methanocaldococcus jannaschii (strain ATCC 43067 / DSM 2661 / JAL-1 / JCM 10045 / NBRC 100440)</name>
    <name type="common">Methanococcus jannaschii</name>
    <dbReference type="NCBI Taxonomy" id="243232"/>
    <lineage>
        <taxon>Archaea</taxon>
        <taxon>Methanobacteriati</taxon>
        <taxon>Methanobacteriota</taxon>
        <taxon>Methanomada group</taxon>
        <taxon>Methanococci</taxon>
        <taxon>Methanococcales</taxon>
        <taxon>Methanocaldococcaceae</taxon>
        <taxon>Methanocaldococcus</taxon>
    </lineage>
</organism>
<reference key="1">
    <citation type="journal article" date="1996" name="Science">
        <title>Complete genome sequence of the methanogenic archaeon, Methanococcus jannaschii.</title>
        <authorList>
            <person name="Bult C.J."/>
            <person name="White O."/>
            <person name="Olsen G.J."/>
            <person name="Zhou L."/>
            <person name="Fleischmann R.D."/>
            <person name="Sutton G.G."/>
            <person name="Blake J.A."/>
            <person name="FitzGerald L.M."/>
            <person name="Clayton R.A."/>
            <person name="Gocayne J.D."/>
            <person name="Kerlavage A.R."/>
            <person name="Dougherty B.A."/>
            <person name="Tomb J.-F."/>
            <person name="Adams M.D."/>
            <person name="Reich C.I."/>
            <person name="Overbeek R."/>
            <person name="Kirkness E.F."/>
            <person name="Weinstock K.G."/>
            <person name="Merrick J.M."/>
            <person name="Glodek A."/>
            <person name="Scott J.L."/>
            <person name="Geoghagen N.S.M."/>
            <person name="Weidman J.F."/>
            <person name="Fuhrmann J.L."/>
            <person name="Nguyen D."/>
            <person name="Utterback T.R."/>
            <person name="Kelley J.M."/>
            <person name="Peterson J.D."/>
            <person name="Sadow P.W."/>
            <person name="Hanna M.C."/>
            <person name="Cotton M.D."/>
            <person name="Roberts K.M."/>
            <person name="Hurst M.A."/>
            <person name="Kaine B.P."/>
            <person name="Borodovsky M."/>
            <person name="Klenk H.-P."/>
            <person name="Fraser C.M."/>
            <person name="Smith H.O."/>
            <person name="Woese C.R."/>
            <person name="Venter J.C."/>
        </authorList>
    </citation>
    <scope>NUCLEOTIDE SEQUENCE [LARGE SCALE GENOMIC DNA]</scope>
    <source>
        <strain>ATCC 43067 / DSM 2661 / JAL-1 / JCM 10045 / NBRC 100440</strain>
    </source>
</reference>
<keyword id="KW-0068">Autocatalytic cleavage</keyword>
<keyword id="KW-0235">DNA replication</keyword>
<keyword id="KW-0238">DNA-binding</keyword>
<keyword id="KW-0239">DNA-directed DNA polymerase</keyword>
<keyword id="KW-0548">Nucleotidyltransferase</keyword>
<keyword id="KW-0651">Protein splicing</keyword>
<keyword id="KW-1185">Reference proteome</keyword>
<keyword id="KW-0677">Repeat</keyword>
<keyword id="KW-0808">Transferase</keyword>
<evidence type="ECO:0000255" key="1"/>
<evidence type="ECO:0000255" key="2">
    <source>
        <dbReference type="PROSITE-ProRule" id="PRU00273"/>
    </source>
</evidence>
<evidence type="ECO:0000305" key="3"/>
<protein>
    <recommendedName>
        <fullName>DNA polymerase</fullName>
        <ecNumber>2.7.7.7</ecNumber>
    </recommendedName>
    <component>
        <recommendedName>
            <fullName>Mja pol-1 intein</fullName>
        </recommendedName>
    </component>
    <component>
        <recommendedName>
            <fullName>Mja pol-2 intein</fullName>
        </recommendedName>
    </component>
</protein>
<dbReference type="EC" id="2.7.7.7"/>
<dbReference type="EMBL" id="L77117">
    <property type="protein sequence ID" value="AAB98889.1"/>
    <property type="molecule type" value="Genomic_DNA"/>
</dbReference>
<dbReference type="PIR" id="E64410">
    <property type="entry name" value="E64410"/>
</dbReference>
<dbReference type="SMR" id="Q58295"/>
<dbReference type="FunCoup" id="Q58295">
    <property type="interactions" value="150"/>
</dbReference>
<dbReference type="STRING" id="243232.MJ_0885"/>
<dbReference type="PaxDb" id="243232-MJ_0885"/>
<dbReference type="EnsemblBacteria" id="AAB98889">
    <property type="protein sequence ID" value="AAB98889"/>
    <property type="gene ID" value="MJ_0885"/>
</dbReference>
<dbReference type="KEGG" id="mja:MJ_0885"/>
<dbReference type="eggNOG" id="arCOG00328">
    <property type="taxonomic scope" value="Archaea"/>
</dbReference>
<dbReference type="eggNOG" id="arCOG00329">
    <property type="taxonomic scope" value="Archaea"/>
</dbReference>
<dbReference type="eggNOG" id="arCOG03145">
    <property type="taxonomic scope" value="Archaea"/>
</dbReference>
<dbReference type="HOGENOM" id="CLU_000203_6_4_2"/>
<dbReference type="InParanoid" id="Q58295"/>
<dbReference type="Proteomes" id="UP000000805">
    <property type="component" value="Chromosome"/>
</dbReference>
<dbReference type="GO" id="GO:0003677">
    <property type="term" value="F:DNA binding"/>
    <property type="evidence" value="ECO:0007669"/>
    <property type="project" value="UniProtKB-KW"/>
</dbReference>
<dbReference type="GO" id="GO:0003887">
    <property type="term" value="F:DNA-directed DNA polymerase activity"/>
    <property type="evidence" value="ECO:0000318"/>
    <property type="project" value="GO_Central"/>
</dbReference>
<dbReference type="GO" id="GO:0004519">
    <property type="term" value="F:endonuclease activity"/>
    <property type="evidence" value="ECO:0007669"/>
    <property type="project" value="InterPro"/>
</dbReference>
<dbReference type="GO" id="GO:0000166">
    <property type="term" value="F:nucleotide binding"/>
    <property type="evidence" value="ECO:0007669"/>
    <property type="project" value="InterPro"/>
</dbReference>
<dbReference type="GO" id="GO:0006261">
    <property type="term" value="P:DNA-templated DNA replication"/>
    <property type="evidence" value="ECO:0000318"/>
    <property type="project" value="GO_Central"/>
</dbReference>
<dbReference type="GO" id="GO:0016539">
    <property type="term" value="P:intein-mediated protein splicing"/>
    <property type="evidence" value="ECO:0007669"/>
    <property type="project" value="InterPro"/>
</dbReference>
<dbReference type="CDD" id="cd05780">
    <property type="entry name" value="DNA_polB_Kod1_like_exo"/>
    <property type="match status" value="1"/>
</dbReference>
<dbReference type="CDD" id="cd00081">
    <property type="entry name" value="Hint"/>
    <property type="match status" value="3"/>
</dbReference>
<dbReference type="FunFam" id="1.10.287.690:FF:000013">
    <property type="entry name" value="DNA polymerase"/>
    <property type="match status" value="1"/>
</dbReference>
<dbReference type="FunFam" id="1.10.132.60:FF:000013">
    <property type="entry name" value="DNA polymerase Pol2"/>
    <property type="match status" value="1"/>
</dbReference>
<dbReference type="FunFam" id="3.30.420.10:FF:000307">
    <property type="entry name" value="DNA polymerase Pol2"/>
    <property type="match status" value="1"/>
</dbReference>
<dbReference type="FunFam" id="3.90.1600.10:FF:000040">
    <property type="entry name" value="DNA-directed DNA polymerase"/>
    <property type="match status" value="1"/>
</dbReference>
<dbReference type="Gene3D" id="1.10.132.60">
    <property type="entry name" value="DNA polymerase family B, C-terminal domain"/>
    <property type="match status" value="1"/>
</dbReference>
<dbReference type="Gene3D" id="3.30.342.10">
    <property type="entry name" value="DNA Polymerase, chain B, domain 1"/>
    <property type="match status" value="1"/>
</dbReference>
<dbReference type="Gene3D" id="2.170.16.10">
    <property type="entry name" value="Hedgehog/Intein (Hint) domain"/>
    <property type="match status" value="2"/>
</dbReference>
<dbReference type="Gene3D" id="1.10.287.690">
    <property type="entry name" value="Helix hairpin bin"/>
    <property type="match status" value="1"/>
</dbReference>
<dbReference type="Gene3D" id="3.10.28.10">
    <property type="entry name" value="Homing endonucleases"/>
    <property type="match status" value="2"/>
</dbReference>
<dbReference type="Gene3D" id="1.10.10.1010">
    <property type="entry name" value="Intein homing endonuclease, domain IV"/>
    <property type="match status" value="1"/>
</dbReference>
<dbReference type="Gene3D" id="3.90.1600.10">
    <property type="entry name" value="Palm domain of DNA polymerase"/>
    <property type="match status" value="2"/>
</dbReference>
<dbReference type="Gene3D" id="3.30.420.10">
    <property type="entry name" value="Ribonuclease H-like superfamily/Ribonuclease H"/>
    <property type="match status" value="1"/>
</dbReference>
<dbReference type="InterPro" id="IPR006172">
    <property type="entry name" value="DNA-dir_DNA_pol_B"/>
</dbReference>
<dbReference type="InterPro" id="IPR017964">
    <property type="entry name" value="DNA-dir_DNA_pol_B_CS"/>
</dbReference>
<dbReference type="InterPro" id="IPR006133">
    <property type="entry name" value="DNA-dir_DNA_pol_B_exonuc"/>
</dbReference>
<dbReference type="InterPro" id="IPR006134">
    <property type="entry name" value="DNA-dir_DNA_pol_B_multi_dom"/>
</dbReference>
<dbReference type="InterPro" id="IPR043502">
    <property type="entry name" value="DNA/RNA_pol_sf"/>
</dbReference>
<dbReference type="InterPro" id="IPR042087">
    <property type="entry name" value="DNA_pol_B_thumb"/>
</dbReference>
<dbReference type="InterPro" id="IPR023211">
    <property type="entry name" value="DNA_pol_palm_dom_sf"/>
</dbReference>
<dbReference type="InterPro" id="IPR050240">
    <property type="entry name" value="DNA_pol_type-B"/>
</dbReference>
<dbReference type="InterPro" id="IPR003586">
    <property type="entry name" value="Hint_dom_C"/>
</dbReference>
<dbReference type="InterPro" id="IPR003587">
    <property type="entry name" value="Hint_dom_N"/>
</dbReference>
<dbReference type="InterPro" id="IPR036844">
    <property type="entry name" value="Hint_dom_sf"/>
</dbReference>
<dbReference type="InterPro" id="IPR027434">
    <property type="entry name" value="Homing_endonucl"/>
</dbReference>
<dbReference type="InterPro" id="IPR006142">
    <property type="entry name" value="INTEIN"/>
</dbReference>
<dbReference type="InterPro" id="IPR030934">
    <property type="entry name" value="Intein_C"/>
</dbReference>
<dbReference type="InterPro" id="IPR004042">
    <property type="entry name" value="Intein_endonuc_central"/>
</dbReference>
<dbReference type="InterPro" id="IPR006141">
    <property type="entry name" value="Intein_N"/>
</dbReference>
<dbReference type="InterPro" id="IPR004860">
    <property type="entry name" value="LAGLIDADG_dom"/>
</dbReference>
<dbReference type="InterPro" id="IPR041005">
    <property type="entry name" value="PI-TkoII_IV"/>
</dbReference>
<dbReference type="InterPro" id="IPR012337">
    <property type="entry name" value="RNaseH-like_sf"/>
</dbReference>
<dbReference type="InterPro" id="IPR036397">
    <property type="entry name" value="RNaseH_sf"/>
</dbReference>
<dbReference type="NCBIfam" id="TIGR01443">
    <property type="entry name" value="intein_Cterm"/>
    <property type="match status" value="2"/>
</dbReference>
<dbReference type="NCBIfam" id="TIGR01445">
    <property type="entry name" value="intein_Nterm"/>
    <property type="match status" value="1"/>
</dbReference>
<dbReference type="NCBIfam" id="TIGR00592">
    <property type="entry name" value="pol2"/>
    <property type="match status" value="1"/>
</dbReference>
<dbReference type="PANTHER" id="PTHR10322">
    <property type="entry name" value="DNA POLYMERASE CATALYTIC SUBUNIT"/>
    <property type="match status" value="1"/>
</dbReference>
<dbReference type="PANTHER" id="PTHR10322:SF23">
    <property type="entry name" value="DNA POLYMERASE DELTA CATALYTIC SUBUNIT"/>
    <property type="match status" value="1"/>
</dbReference>
<dbReference type="Pfam" id="PF00136">
    <property type="entry name" value="DNA_pol_B"/>
    <property type="match status" value="3"/>
</dbReference>
<dbReference type="Pfam" id="PF03104">
    <property type="entry name" value="DNA_pol_B_exo1"/>
    <property type="match status" value="1"/>
</dbReference>
<dbReference type="Pfam" id="PF14890">
    <property type="entry name" value="Intein_splicing"/>
    <property type="match status" value="1"/>
</dbReference>
<dbReference type="Pfam" id="PF14528">
    <property type="entry name" value="LAGLIDADG_3"/>
    <property type="match status" value="1"/>
</dbReference>
<dbReference type="Pfam" id="PF18714">
    <property type="entry name" value="PI-TkoII_IV"/>
    <property type="match status" value="1"/>
</dbReference>
<dbReference type="PRINTS" id="PR00379">
    <property type="entry name" value="INTEIN"/>
</dbReference>
<dbReference type="SMART" id="SM00305">
    <property type="entry name" value="HintC"/>
    <property type="match status" value="2"/>
</dbReference>
<dbReference type="SMART" id="SM00306">
    <property type="entry name" value="HintN"/>
    <property type="match status" value="2"/>
</dbReference>
<dbReference type="SMART" id="SM00486">
    <property type="entry name" value="POLBc"/>
    <property type="match status" value="1"/>
</dbReference>
<dbReference type="SUPFAM" id="SSF56672">
    <property type="entry name" value="DNA/RNA polymerases"/>
    <property type="match status" value="3"/>
</dbReference>
<dbReference type="SUPFAM" id="SSF51294">
    <property type="entry name" value="Hedgehog/intein (Hint) domain"/>
    <property type="match status" value="2"/>
</dbReference>
<dbReference type="SUPFAM" id="SSF55608">
    <property type="entry name" value="Homing endonucleases"/>
    <property type="match status" value="2"/>
</dbReference>
<dbReference type="SUPFAM" id="SSF53098">
    <property type="entry name" value="Ribonuclease H-like"/>
    <property type="match status" value="1"/>
</dbReference>
<dbReference type="PROSITE" id="PS00116">
    <property type="entry name" value="DNA_POLYMERASE_B"/>
    <property type="match status" value="1"/>
</dbReference>
<dbReference type="PROSITE" id="PS50818">
    <property type="entry name" value="INTEIN_C_TER"/>
    <property type="match status" value="2"/>
</dbReference>
<dbReference type="PROSITE" id="PS50819">
    <property type="entry name" value="INTEIN_ENDONUCLEASE"/>
    <property type="match status" value="2"/>
</dbReference>
<dbReference type="PROSITE" id="PS50817">
    <property type="entry name" value="INTEIN_N_TER"/>
    <property type="match status" value="2"/>
</dbReference>
<proteinExistence type="inferred from homology"/>
<name>DPOL_METJA</name>
<gene>
    <name type="primary">pol</name>
    <name type="ordered locus">MJ0885</name>
</gene>